<reference key="1">
    <citation type="journal article" date="2011" name="Stand. Genomic Sci.">
        <title>Complete genome sequence of the halophilic and highly halotolerant Chromohalobacter salexigens type strain (1H11(T)).</title>
        <authorList>
            <person name="Copeland A."/>
            <person name="O'Connor K."/>
            <person name="Lucas S."/>
            <person name="Lapidus A."/>
            <person name="Berry K.W."/>
            <person name="Detter J.C."/>
            <person name="Del Rio T.G."/>
            <person name="Hammon N."/>
            <person name="Dalin E."/>
            <person name="Tice H."/>
            <person name="Pitluck S."/>
            <person name="Bruce D."/>
            <person name="Goodwin L."/>
            <person name="Han C."/>
            <person name="Tapia R."/>
            <person name="Saunders E."/>
            <person name="Schmutz J."/>
            <person name="Brettin T."/>
            <person name="Larimer F."/>
            <person name="Land M."/>
            <person name="Hauser L."/>
            <person name="Vargas C."/>
            <person name="Nieto J.J."/>
            <person name="Kyrpides N.C."/>
            <person name="Ivanova N."/>
            <person name="Goker M."/>
            <person name="Klenk H.P."/>
            <person name="Csonka L.N."/>
            <person name="Woyke T."/>
        </authorList>
    </citation>
    <scope>NUCLEOTIDE SEQUENCE [LARGE SCALE GENOMIC DNA]</scope>
    <source>
        <strain>ATCC BAA-138 / DSM 3043 / CIP 106854 / NCIMB 13768 / 1H11</strain>
    </source>
</reference>
<keyword id="KW-1185">Reference proteome</keyword>
<keyword id="KW-0687">Ribonucleoprotein</keyword>
<keyword id="KW-0689">Ribosomal protein</keyword>
<keyword id="KW-0694">RNA-binding</keyword>
<keyword id="KW-0699">rRNA-binding</keyword>
<name>RL18_CHRSD</name>
<organism>
    <name type="scientific">Chromohalobacter salexigens (strain ATCC BAA-138 / DSM 3043 / CIP 106854 / NCIMB 13768 / 1H11)</name>
    <dbReference type="NCBI Taxonomy" id="290398"/>
    <lineage>
        <taxon>Bacteria</taxon>
        <taxon>Pseudomonadati</taxon>
        <taxon>Pseudomonadota</taxon>
        <taxon>Gammaproteobacteria</taxon>
        <taxon>Oceanospirillales</taxon>
        <taxon>Halomonadaceae</taxon>
        <taxon>Chromohalobacter</taxon>
    </lineage>
</organism>
<sequence length="116" mass="12489">MNAKKEARLRRARRARAKIREQGVSRLSVNRTPRHIYAQIISPDGGQVLASASTLDKSLREGSTGNSDAAAKVGALIAERAKEAGITEVAFDRAGFKYHGRVKALADAAREGGLEF</sequence>
<dbReference type="EMBL" id="CP000285">
    <property type="protein sequence ID" value="ABE57799.1"/>
    <property type="molecule type" value="Genomic_DNA"/>
</dbReference>
<dbReference type="RefSeq" id="WP_011505745.1">
    <property type="nucleotide sequence ID" value="NC_007963.1"/>
</dbReference>
<dbReference type="SMR" id="Q1R0F9"/>
<dbReference type="STRING" id="290398.Csal_0437"/>
<dbReference type="GeneID" id="95333190"/>
<dbReference type="KEGG" id="csa:Csal_0437"/>
<dbReference type="eggNOG" id="COG0256">
    <property type="taxonomic scope" value="Bacteria"/>
</dbReference>
<dbReference type="HOGENOM" id="CLU_098841_0_1_6"/>
<dbReference type="OrthoDB" id="9810939at2"/>
<dbReference type="Proteomes" id="UP000000239">
    <property type="component" value="Chromosome"/>
</dbReference>
<dbReference type="GO" id="GO:0022625">
    <property type="term" value="C:cytosolic large ribosomal subunit"/>
    <property type="evidence" value="ECO:0007669"/>
    <property type="project" value="TreeGrafter"/>
</dbReference>
<dbReference type="GO" id="GO:0008097">
    <property type="term" value="F:5S rRNA binding"/>
    <property type="evidence" value="ECO:0007669"/>
    <property type="project" value="TreeGrafter"/>
</dbReference>
<dbReference type="GO" id="GO:0003735">
    <property type="term" value="F:structural constituent of ribosome"/>
    <property type="evidence" value="ECO:0007669"/>
    <property type="project" value="InterPro"/>
</dbReference>
<dbReference type="GO" id="GO:0006412">
    <property type="term" value="P:translation"/>
    <property type="evidence" value="ECO:0007669"/>
    <property type="project" value="UniProtKB-UniRule"/>
</dbReference>
<dbReference type="CDD" id="cd00432">
    <property type="entry name" value="Ribosomal_L18_L5e"/>
    <property type="match status" value="1"/>
</dbReference>
<dbReference type="FunFam" id="3.30.420.100:FF:000001">
    <property type="entry name" value="50S ribosomal protein L18"/>
    <property type="match status" value="1"/>
</dbReference>
<dbReference type="Gene3D" id="3.30.420.100">
    <property type="match status" value="1"/>
</dbReference>
<dbReference type="HAMAP" id="MF_01337_B">
    <property type="entry name" value="Ribosomal_uL18_B"/>
    <property type="match status" value="1"/>
</dbReference>
<dbReference type="InterPro" id="IPR004389">
    <property type="entry name" value="Ribosomal_uL18_bac-type"/>
</dbReference>
<dbReference type="InterPro" id="IPR005484">
    <property type="entry name" value="Ribosomal_uL18_bac/euk"/>
</dbReference>
<dbReference type="NCBIfam" id="TIGR00060">
    <property type="entry name" value="L18_bact"/>
    <property type="match status" value="1"/>
</dbReference>
<dbReference type="PANTHER" id="PTHR12899">
    <property type="entry name" value="39S RIBOSOMAL PROTEIN L18, MITOCHONDRIAL"/>
    <property type="match status" value="1"/>
</dbReference>
<dbReference type="PANTHER" id="PTHR12899:SF3">
    <property type="entry name" value="LARGE RIBOSOMAL SUBUNIT PROTEIN UL18M"/>
    <property type="match status" value="1"/>
</dbReference>
<dbReference type="Pfam" id="PF00861">
    <property type="entry name" value="Ribosomal_L18p"/>
    <property type="match status" value="1"/>
</dbReference>
<dbReference type="SUPFAM" id="SSF53137">
    <property type="entry name" value="Translational machinery components"/>
    <property type="match status" value="1"/>
</dbReference>
<accession>Q1R0F9</accession>
<proteinExistence type="inferred from homology"/>
<comment type="function">
    <text evidence="1">This is one of the proteins that bind and probably mediate the attachment of the 5S RNA into the large ribosomal subunit, where it forms part of the central protuberance.</text>
</comment>
<comment type="subunit">
    <text evidence="1">Part of the 50S ribosomal subunit; part of the 5S rRNA/L5/L18/L25 subcomplex. Contacts the 5S and 23S rRNAs.</text>
</comment>
<comment type="similarity">
    <text evidence="1">Belongs to the universal ribosomal protein uL18 family.</text>
</comment>
<evidence type="ECO:0000255" key="1">
    <source>
        <dbReference type="HAMAP-Rule" id="MF_01337"/>
    </source>
</evidence>
<evidence type="ECO:0000305" key="2"/>
<feature type="chain" id="PRO_0000251301" description="Large ribosomal subunit protein uL18">
    <location>
        <begin position="1"/>
        <end position="116"/>
    </location>
</feature>
<gene>
    <name evidence="1" type="primary">rplR</name>
    <name type="ordered locus">Csal_0437</name>
</gene>
<protein>
    <recommendedName>
        <fullName evidence="1">Large ribosomal subunit protein uL18</fullName>
    </recommendedName>
    <alternativeName>
        <fullName evidence="2">50S ribosomal protein L18</fullName>
    </alternativeName>
</protein>